<evidence type="ECO:0000250" key="1"/>
<evidence type="ECO:0000305" key="2"/>
<sequence>MWFVLYIFLALPLLLVAYLELSTFRRRRVLNKFNGPRGLPLMGNAHQMGKNPSEILDTVFSWWHQYGKDNFVFWIGTYSNVLVTSSKYLEFILSSQTLITKSDIYQLTHPWLGLGLLTSTGSKWHKHRKMITPAFHFNILQDFHEVMNENSTKFIKHLKTVAAGDNIFDFQEQAHYLTLDVICDTAMGVSINAMENRSSSIVQAFKDMCYNINMRAFHPLKRNELLYRLAPDYPAYSRTLKTLQDFTNEIIAKRIEAHKSGAVSTNAGDEFTRKKMAFLDTLLSSTIDGRPLNSKELYEEVSTFMFEGHDTTTSGVSFAVYLLSRHQDEQRKLFKEQREVMGNSELGRDATFQEISQMKYLDLFIKEAQRVYPSVPFIGRFTEKDYVIDGDLVPKGTTLNLGLVMLGYNEKVFKDPHKFRPERFELEKPGPFEYVPFSAGPRNCIGQKFALLEIKTVVSKIIRNFEVLPALDELVSKDGYISTTIGLPDAERKKRDPYRHKYDPILSAVLTLKSENGLYIRLKERH</sequence>
<protein>
    <recommendedName>
        <fullName>Cytochrome P450 4e2</fullName>
        <ecNumber>1.14.-.-</ecNumber>
    </recommendedName>
    <alternativeName>
        <fullName>CYPIVE2</fullName>
    </alternativeName>
</protein>
<comment type="function">
    <text evidence="1">May be involved in the metabolism of insect hormones and in the breakdown of synthetic insecticides.</text>
</comment>
<comment type="cofactor">
    <cofactor evidence="1">
        <name>heme</name>
        <dbReference type="ChEBI" id="CHEBI:30413"/>
    </cofactor>
</comment>
<comment type="subcellular location">
    <subcellularLocation>
        <location evidence="2">Endoplasmic reticulum membrane</location>
        <topology evidence="2">Peripheral membrane protein</topology>
    </subcellularLocation>
    <subcellularLocation>
        <location evidence="2">Microsome membrane</location>
        <topology evidence="2">Peripheral membrane protein</topology>
    </subcellularLocation>
</comment>
<comment type="similarity">
    <text evidence="2">Belongs to the cytochrome P450 family.</text>
</comment>
<name>CP4E2_DROME</name>
<proteinExistence type="evidence at transcript level"/>
<accession>Q27606</accession>
<accession>Q24130</accession>
<accession>Q24291</accession>
<accession>Q9V4T4</accession>
<feature type="chain" id="PRO_0000051841" description="Cytochrome P450 4e2">
    <location>
        <begin position="1"/>
        <end position="526"/>
    </location>
</feature>
<feature type="binding site" description="covalent" evidence="1">
    <location>
        <position position="307"/>
    </location>
    <ligand>
        <name>heme</name>
        <dbReference type="ChEBI" id="CHEBI:30413"/>
    </ligand>
</feature>
<feature type="binding site" description="axial binding residue" evidence="1">
    <location>
        <position position="444"/>
    </location>
    <ligand>
        <name>heme</name>
        <dbReference type="ChEBI" id="CHEBI:30413"/>
    </ligand>
    <ligandPart>
        <name>Fe</name>
        <dbReference type="ChEBI" id="CHEBI:18248"/>
    </ligandPart>
</feature>
<feature type="sequence conflict" description="In Ref. 5; CAA60032." evidence="2" ref="5">
    <original>E</original>
    <variation>K</variation>
    <location>
        <position position="256"/>
    </location>
</feature>
<feature type="sequence conflict" description="In Ref. 5; CAA60032." evidence="2" ref="5">
    <original>S</original>
    <variation>D</variation>
    <location>
        <position position="302"/>
    </location>
</feature>
<keyword id="KW-0256">Endoplasmic reticulum</keyword>
<keyword id="KW-0349">Heme</keyword>
<keyword id="KW-0408">Iron</keyword>
<keyword id="KW-0472">Membrane</keyword>
<keyword id="KW-0479">Metal-binding</keyword>
<keyword id="KW-0492">Microsome</keyword>
<keyword id="KW-0503">Monooxygenase</keyword>
<keyword id="KW-0560">Oxidoreductase</keyword>
<keyword id="KW-1185">Reference proteome</keyword>
<gene>
    <name type="primary">Cyp4e2</name>
    <name type="ORF">CG2060</name>
</gene>
<reference key="1">
    <citation type="journal article" date="1996" name="Gene">
        <title>The sequence of a Drosophila Cyp4e2 cytochrome P450-encoding cDNA.</title>
        <authorList>
            <person name="Pittendrigh B.R."/>
            <person name="Mocelin G."/>
            <person name="Andreev O."/>
            <person name="ffrench-Constant R.H."/>
        </authorList>
    </citation>
    <scope>NUCLEOTIDE SEQUENCE [MRNA] OF 42-526</scope>
    <source>
        <tissue>Embryo</tissue>
    </source>
</reference>
<reference key="2">
    <citation type="journal article" date="2000" name="Science">
        <title>The genome sequence of Drosophila melanogaster.</title>
        <authorList>
            <person name="Adams M.D."/>
            <person name="Celniker S.E."/>
            <person name="Holt R.A."/>
            <person name="Evans C.A."/>
            <person name="Gocayne J.D."/>
            <person name="Amanatides P.G."/>
            <person name="Scherer S.E."/>
            <person name="Li P.W."/>
            <person name="Hoskins R.A."/>
            <person name="Galle R.F."/>
            <person name="George R.A."/>
            <person name="Lewis S.E."/>
            <person name="Richards S."/>
            <person name="Ashburner M."/>
            <person name="Henderson S.N."/>
            <person name="Sutton G.G."/>
            <person name="Wortman J.R."/>
            <person name="Yandell M.D."/>
            <person name="Zhang Q."/>
            <person name="Chen L.X."/>
            <person name="Brandon R.C."/>
            <person name="Rogers Y.-H.C."/>
            <person name="Blazej R.G."/>
            <person name="Champe M."/>
            <person name="Pfeiffer B.D."/>
            <person name="Wan K.H."/>
            <person name="Doyle C."/>
            <person name="Baxter E.G."/>
            <person name="Helt G."/>
            <person name="Nelson C.R."/>
            <person name="Miklos G.L.G."/>
            <person name="Abril J.F."/>
            <person name="Agbayani A."/>
            <person name="An H.-J."/>
            <person name="Andrews-Pfannkoch C."/>
            <person name="Baldwin D."/>
            <person name="Ballew R.M."/>
            <person name="Basu A."/>
            <person name="Baxendale J."/>
            <person name="Bayraktaroglu L."/>
            <person name="Beasley E.M."/>
            <person name="Beeson K.Y."/>
            <person name="Benos P.V."/>
            <person name="Berman B.P."/>
            <person name="Bhandari D."/>
            <person name="Bolshakov S."/>
            <person name="Borkova D."/>
            <person name="Botchan M.R."/>
            <person name="Bouck J."/>
            <person name="Brokstein P."/>
            <person name="Brottier P."/>
            <person name="Burtis K.C."/>
            <person name="Busam D.A."/>
            <person name="Butler H."/>
            <person name="Cadieu E."/>
            <person name="Center A."/>
            <person name="Chandra I."/>
            <person name="Cherry J.M."/>
            <person name="Cawley S."/>
            <person name="Dahlke C."/>
            <person name="Davenport L.B."/>
            <person name="Davies P."/>
            <person name="de Pablos B."/>
            <person name="Delcher A."/>
            <person name="Deng Z."/>
            <person name="Mays A.D."/>
            <person name="Dew I."/>
            <person name="Dietz S.M."/>
            <person name="Dodson K."/>
            <person name="Doup L.E."/>
            <person name="Downes M."/>
            <person name="Dugan-Rocha S."/>
            <person name="Dunkov B.C."/>
            <person name="Dunn P."/>
            <person name="Durbin K.J."/>
            <person name="Evangelista C.C."/>
            <person name="Ferraz C."/>
            <person name="Ferriera S."/>
            <person name="Fleischmann W."/>
            <person name="Fosler C."/>
            <person name="Gabrielian A.E."/>
            <person name="Garg N.S."/>
            <person name="Gelbart W.M."/>
            <person name="Glasser K."/>
            <person name="Glodek A."/>
            <person name="Gong F."/>
            <person name="Gorrell J.H."/>
            <person name="Gu Z."/>
            <person name="Guan P."/>
            <person name="Harris M."/>
            <person name="Harris N.L."/>
            <person name="Harvey D.A."/>
            <person name="Heiman T.J."/>
            <person name="Hernandez J.R."/>
            <person name="Houck J."/>
            <person name="Hostin D."/>
            <person name="Houston K.A."/>
            <person name="Howland T.J."/>
            <person name="Wei M.-H."/>
            <person name="Ibegwam C."/>
            <person name="Jalali M."/>
            <person name="Kalush F."/>
            <person name="Karpen G.H."/>
            <person name="Ke Z."/>
            <person name="Kennison J.A."/>
            <person name="Ketchum K.A."/>
            <person name="Kimmel B.E."/>
            <person name="Kodira C.D."/>
            <person name="Kraft C.L."/>
            <person name="Kravitz S."/>
            <person name="Kulp D."/>
            <person name="Lai Z."/>
            <person name="Lasko P."/>
            <person name="Lei Y."/>
            <person name="Levitsky A.A."/>
            <person name="Li J.H."/>
            <person name="Li Z."/>
            <person name="Liang Y."/>
            <person name="Lin X."/>
            <person name="Liu X."/>
            <person name="Mattei B."/>
            <person name="McIntosh T.C."/>
            <person name="McLeod M.P."/>
            <person name="McPherson D."/>
            <person name="Merkulov G."/>
            <person name="Milshina N.V."/>
            <person name="Mobarry C."/>
            <person name="Morris J."/>
            <person name="Moshrefi A."/>
            <person name="Mount S.M."/>
            <person name="Moy M."/>
            <person name="Murphy B."/>
            <person name="Murphy L."/>
            <person name="Muzny D.M."/>
            <person name="Nelson D.L."/>
            <person name="Nelson D.R."/>
            <person name="Nelson K.A."/>
            <person name="Nixon K."/>
            <person name="Nusskern D.R."/>
            <person name="Pacleb J.M."/>
            <person name="Palazzolo M."/>
            <person name="Pittman G.S."/>
            <person name="Pan S."/>
            <person name="Pollard J."/>
            <person name="Puri V."/>
            <person name="Reese M.G."/>
            <person name="Reinert K."/>
            <person name="Remington K."/>
            <person name="Saunders R.D.C."/>
            <person name="Scheeler F."/>
            <person name="Shen H."/>
            <person name="Shue B.C."/>
            <person name="Siden-Kiamos I."/>
            <person name="Simpson M."/>
            <person name="Skupski M.P."/>
            <person name="Smith T.J."/>
            <person name="Spier E."/>
            <person name="Spradling A.C."/>
            <person name="Stapleton M."/>
            <person name="Strong R."/>
            <person name="Sun E."/>
            <person name="Svirskas R."/>
            <person name="Tector C."/>
            <person name="Turner R."/>
            <person name="Venter E."/>
            <person name="Wang A.H."/>
            <person name="Wang X."/>
            <person name="Wang Z.-Y."/>
            <person name="Wassarman D.A."/>
            <person name="Weinstock G.M."/>
            <person name="Weissenbach J."/>
            <person name="Williams S.M."/>
            <person name="Woodage T."/>
            <person name="Worley K.C."/>
            <person name="Wu D."/>
            <person name="Yang S."/>
            <person name="Yao Q.A."/>
            <person name="Ye J."/>
            <person name="Yeh R.-F."/>
            <person name="Zaveri J.S."/>
            <person name="Zhan M."/>
            <person name="Zhang G."/>
            <person name="Zhao Q."/>
            <person name="Zheng L."/>
            <person name="Zheng X.H."/>
            <person name="Zhong F.N."/>
            <person name="Zhong W."/>
            <person name="Zhou X."/>
            <person name="Zhu S.C."/>
            <person name="Zhu X."/>
            <person name="Smith H.O."/>
            <person name="Gibbs R.A."/>
            <person name="Myers E.W."/>
            <person name="Rubin G.M."/>
            <person name="Venter J.C."/>
        </authorList>
    </citation>
    <scope>NUCLEOTIDE SEQUENCE [LARGE SCALE GENOMIC DNA]</scope>
    <source>
        <strain>Berkeley</strain>
    </source>
</reference>
<reference key="3">
    <citation type="journal article" date="2002" name="Genome Biol.">
        <title>Annotation of the Drosophila melanogaster euchromatic genome: a systematic review.</title>
        <authorList>
            <person name="Misra S."/>
            <person name="Crosby M.A."/>
            <person name="Mungall C.J."/>
            <person name="Matthews B.B."/>
            <person name="Campbell K.S."/>
            <person name="Hradecky P."/>
            <person name="Huang Y."/>
            <person name="Kaminker J.S."/>
            <person name="Millburn G.H."/>
            <person name="Prochnik S.E."/>
            <person name="Smith C.D."/>
            <person name="Tupy J.L."/>
            <person name="Whitfield E.J."/>
            <person name="Bayraktaroglu L."/>
            <person name="Berman B.P."/>
            <person name="Bettencourt B.R."/>
            <person name="Celniker S.E."/>
            <person name="de Grey A.D.N.J."/>
            <person name="Drysdale R.A."/>
            <person name="Harris N.L."/>
            <person name="Richter J."/>
            <person name="Russo S."/>
            <person name="Schroeder A.J."/>
            <person name="Shu S.Q."/>
            <person name="Stapleton M."/>
            <person name="Yamada C."/>
            <person name="Ashburner M."/>
            <person name="Gelbart W.M."/>
            <person name="Rubin G.M."/>
            <person name="Lewis S.E."/>
        </authorList>
    </citation>
    <scope>GENOME REANNOTATION</scope>
    <source>
        <strain>Berkeley</strain>
    </source>
</reference>
<reference key="4">
    <citation type="journal article" date="2002" name="Genome Biol.">
        <title>A Drosophila full-length cDNA resource.</title>
        <authorList>
            <person name="Stapleton M."/>
            <person name="Carlson J.W."/>
            <person name="Brokstein P."/>
            <person name="Yu C."/>
            <person name="Champe M."/>
            <person name="George R.A."/>
            <person name="Guarin H."/>
            <person name="Kronmiller B."/>
            <person name="Pacleb J.M."/>
            <person name="Park S."/>
            <person name="Wan K.H."/>
            <person name="Rubin G.M."/>
            <person name="Celniker S.E."/>
        </authorList>
    </citation>
    <scope>NUCLEOTIDE SEQUENCE [LARGE SCALE MRNA]</scope>
    <source>
        <strain>Berkeley</strain>
        <tissue>Embryo</tissue>
    </source>
</reference>
<reference key="5">
    <citation type="submission" date="1995-04" db="EMBL/GenBank/DDBJ databases">
        <title>Cloning and expression study of CYP4E2 a novel P450 gene in Drosophila.</title>
        <authorList>
            <person name="Amichot M."/>
            <person name="Brun A."/>
            <person name="Cuany A."/>
            <person name="Lemouel T."/>
            <person name="Berge J.-B."/>
        </authorList>
    </citation>
    <scope>NUCLEOTIDE SEQUENCE [MRNA] OF 42-444</scope>
    <source>
        <strain>Raleigh DDTR</strain>
    </source>
</reference>
<reference key="6">
    <citation type="journal article" date="1996" name="Mol. Gen. Genet.">
        <title>Cytochrome P450 gene clusters in Drosophila melanogaster.</title>
        <authorList>
            <person name="Dunkov B.C."/>
            <person name="Rodriguez-Arnaiz R."/>
            <person name="Pittendrigh B."/>
            <person name="ffrench-Constant R.H."/>
            <person name="Feyereisen R."/>
        </authorList>
    </citation>
    <scope>NUCLEOTIDE SEQUENCE [MRNA] OF 312-435</scope>
    <source>
        <strain>Haag-79</strain>
    </source>
</reference>
<dbReference type="EC" id="1.14.-.-"/>
<dbReference type="EMBL" id="U56957">
    <property type="protein sequence ID" value="AAC47424.1"/>
    <property type="molecule type" value="mRNA"/>
</dbReference>
<dbReference type="EMBL" id="AE013599">
    <property type="protein sequence ID" value="AAF59091.1"/>
    <property type="molecule type" value="Genomic_DNA"/>
</dbReference>
<dbReference type="EMBL" id="AY058518">
    <property type="protein sequence ID" value="AAL13747.1"/>
    <property type="molecule type" value="mRNA"/>
</dbReference>
<dbReference type="EMBL" id="X86076">
    <property type="protein sequence ID" value="CAA60032.1"/>
    <property type="molecule type" value="mRNA"/>
</dbReference>
<dbReference type="EMBL" id="U34332">
    <property type="protein sequence ID" value="AAA80666.1"/>
    <property type="molecule type" value="mRNA"/>
</dbReference>
<dbReference type="PIR" id="JC5236">
    <property type="entry name" value="JC5236"/>
</dbReference>
<dbReference type="PIR" id="S57646">
    <property type="entry name" value="S57646"/>
</dbReference>
<dbReference type="PIR" id="S70622">
    <property type="entry name" value="S70622"/>
</dbReference>
<dbReference type="RefSeq" id="NP_001286196.1">
    <property type="nucleotide sequence ID" value="NM_001299267.1"/>
</dbReference>
<dbReference type="RefSeq" id="NP_477117.2">
    <property type="nucleotide sequence ID" value="NM_057769.4"/>
</dbReference>
<dbReference type="SMR" id="Q27606"/>
<dbReference type="BioGRID" id="61675">
    <property type="interactions" value="5"/>
</dbReference>
<dbReference type="DIP" id="DIP-23009N"/>
<dbReference type="FunCoup" id="Q27606">
    <property type="interactions" value="166"/>
</dbReference>
<dbReference type="IntAct" id="Q27606">
    <property type="interactions" value="5"/>
</dbReference>
<dbReference type="STRING" id="7227.FBpp0308387"/>
<dbReference type="PaxDb" id="7227-FBpp0087824"/>
<dbReference type="DNASU" id="35822"/>
<dbReference type="EnsemblMetazoa" id="FBtr0088745">
    <property type="protein sequence ID" value="FBpp0087824"/>
    <property type="gene ID" value="FBgn0014469"/>
</dbReference>
<dbReference type="EnsemblMetazoa" id="FBtr0339278">
    <property type="protein sequence ID" value="FBpp0308387"/>
    <property type="gene ID" value="FBgn0014469"/>
</dbReference>
<dbReference type="GeneID" id="35822"/>
<dbReference type="KEGG" id="dme:Dmel_CG2060"/>
<dbReference type="AGR" id="FB:FBgn0014469"/>
<dbReference type="CTD" id="35822"/>
<dbReference type="FlyBase" id="FBgn0014469">
    <property type="gene designation" value="Cyp4e2"/>
</dbReference>
<dbReference type="VEuPathDB" id="VectorBase:FBgn0014469"/>
<dbReference type="eggNOG" id="KOG0157">
    <property type="taxonomic scope" value="Eukaryota"/>
</dbReference>
<dbReference type="GeneTree" id="ENSGT00940000165700"/>
<dbReference type="HOGENOM" id="CLU_001570_5_1_1"/>
<dbReference type="InParanoid" id="Q27606"/>
<dbReference type="OMA" id="AKNPRIW"/>
<dbReference type="OrthoDB" id="1470350at2759"/>
<dbReference type="PhylomeDB" id="Q27606"/>
<dbReference type="Reactome" id="R-DME-193144">
    <property type="pathway name" value="Estrogen biosynthesis"/>
</dbReference>
<dbReference type="Reactome" id="R-DME-211976">
    <property type="pathway name" value="Endogenous sterols"/>
</dbReference>
<dbReference type="BioGRID-ORCS" id="35822">
    <property type="hits" value="0 hits in 3 CRISPR screens"/>
</dbReference>
<dbReference type="GenomeRNAi" id="35822"/>
<dbReference type="PRO" id="PR:Q27606"/>
<dbReference type="Proteomes" id="UP000000803">
    <property type="component" value="Chromosome 2R"/>
</dbReference>
<dbReference type="Bgee" id="FBgn0014469">
    <property type="expression patterns" value="Expressed in adult Malpighian tubule (Drosophila) and 115 other cell types or tissues"/>
</dbReference>
<dbReference type="ExpressionAtlas" id="Q27606">
    <property type="expression patterns" value="baseline and differential"/>
</dbReference>
<dbReference type="GO" id="GO:0012505">
    <property type="term" value="C:endomembrane system"/>
    <property type="evidence" value="ECO:0007005"/>
    <property type="project" value="FlyBase"/>
</dbReference>
<dbReference type="GO" id="GO:0005789">
    <property type="term" value="C:endoplasmic reticulum membrane"/>
    <property type="evidence" value="ECO:0007669"/>
    <property type="project" value="UniProtKB-SubCell"/>
</dbReference>
<dbReference type="GO" id="GO:0020037">
    <property type="term" value="F:heme binding"/>
    <property type="evidence" value="ECO:0007669"/>
    <property type="project" value="InterPro"/>
</dbReference>
<dbReference type="GO" id="GO:0005506">
    <property type="term" value="F:iron ion binding"/>
    <property type="evidence" value="ECO:0007669"/>
    <property type="project" value="InterPro"/>
</dbReference>
<dbReference type="GO" id="GO:0004497">
    <property type="term" value="F:monooxygenase activity"/>
    <property type="evidence" value="ECO:0007669"/>
    <property type="project" value="UniProtKB-KW"/>
</dbReference>
<dbReference type="GO" id="GO:0016705">
    <property type="term" value="F:oxidoreductase activity, acting on paired donors, with incorporation or reduction of molecular oxygen"/>
    <property type="evidence" value="ECO:0007669"/>
    <property type="project" value="InterPro"/>
</dbReference>
<dbReference type="CDD" id="cd20628">
    <property type="entry name" value="CYP4"/>
    <property type="match status" value="1"/>
</dbReference>
<dbReference type="Gene3D" id="1.10.630.10">
    <property type="entry name" value="Cytochrome P450"/>
    <property type="match status" value="1"/>
</dbReference>
<dbReference type="InterPro" id="IPR001128">
    <property type="entry name" value="Cyt_P450"/>
</dbReference>
<dbReference type="InterPro" id="IPR017972">
    <property type="entry name" value="Cyt_P450_CS"/>
</dbReference>
<dbReference type="InterPro" id="IPR002401">
    <property type="entry name" value="Cyt_P450_E_grp-I"/>
</dbReference>
<dbReference type="InterPro" id="IPR036396">
    <property type="entry name" value="Cyt_P450_sf"/>
</dbReference>
<dbReference type="InterPro" id="IPR050196">
    <property type="entry name" value="Cytochrome_P450_Monoox"/>
</dbReference>
<dbReference type="PANTHER" id="PTHR24291:SF203">
    <property type="entry name" value="CYTOCHROME P450 4D1-RELATED"/>
    <property type="match status" value="1"/>
</dbReference>
<dbReference type="PANTHER" id="PTHR24291">
    <property type="entry name" value="CYTOCHROME P450 FAMILY 4"/>
    <property type="match status" value="1"/>
</dbReference>
<dbReference type="Pfam" id="PF00067">
    <property type="entry name" value="p450"/>
    <property type="match status" value="1"/>
</dbReference>
<dbReference type="PRINTS" id="PR00463">
    <property type="entry name" value="EP450I"/>
</dbReference>
<dbReference type="PRINTS" id="PR00385">
    <property type="entry name" value="P450"/>
</dbReference>
<dbReference type="SUPFAM" id="SSF48264">
    <property type="entry name" value="Cytochrome P450"/>
    <property type="match status" value="1"/>
</dbReference>
<dbReference type="PROSITE" id="PS00086">
    <property type="entry name" value="CYTOCHROME_P450"/>
    <property type="match status" value="1"/>
</dbReference>
<organism>
    <name type="scientific">Drosophila melanogaster</name>
    <name type="common">Fruit fly</name>
    <dbReference type="NCBI Taxonomy" id="7227"/>
    <lineage>
        <taxon>Eukaryota</taxon>
        <taxon>Metazoa</taxon>
        <taxon>Ecdysozoa</taxon>
        <taxon>Arthropoda</taxon>
        <taxon>Hexapoda</taxon>
        <taxon>Insecta</taxon>
        <taxon>Pterygota</taxon>
        <taxon>Neoptera</taxon>
        <taxon>Endopterygota</taxon>
        <taxon>Diptera</taxon>
        <taxon>Brachycera</taxon>
        <taxon>Muscomorpha</taxon>
        <taxon>Ephydroidea</taxon>
        <taxon>Drosophilidae</taxon>
        <taxon>Drosophila</taxon>
        <taxon>Sophophora</taxon>
    </lineage>
</organism>